<dbReference type="EMBL" id="DQ923116">
    <property type="protein sequence ID" value="ABI49774.1"/>
    <property type="molecule type" value="Genomic_DNA"/>
</dbReference>
<dbReference type="RefSeq" id="YP_740561.1">
    <property type="nucleotide sequence ID" value="NC_008335.1"/>
</dbReference>
<dbReference type="SMR" id="Q09G50"/>
<dbReference type="GeneID" id="4271259"/>
<dbReference type="GO" id="GO:0009535">
    <property type="term" value="C:chloroplast thylakoid membrane"/>
    <property type="evidence" value="ECO:0007669"/>
    <property type="project" value="UniProtKB-SubCell"/>
</dbReference>
<dbReference type="GO" id="GO:0009523">
    <property type="term" value="C:photosystem II"/>
    <property type="evidence" value="ECO:0007669"/>
    <property type="project" value="UniProtKB-KW"/>
</dbReference>
<dbReference type="GO" id="GO:0016168">
    <property type="term" value="F:chlorophyll binding"/>
    <property type="evidence" value="ECO:0007669"/>
    <property type="project" value="UniProtKB-UniRule"/>
</dbReference>
<dbReference type="GO" id="GO:0045156">
    <property type="term" value="F:electron transporter, transferring electrons within the cyclic electron transport pathway of photosynthesis activity"/>
    <property type="evidence" value="ECO:0007669"/>
    <property type="project" value="InterPro"/>
</dbReference>
<dbReference type="GO" id="GO:0046872">
    <property type="term" value="F:metal ion binding"/>
    <property type="evidence" value="ECO:0007669"/>
    <property type="project" value="UniProtKB-KW"/>
</dbReference>
<dbReference type="GO" id="GO:0009772">
    <property type="term" value="P:photosynthetic electron transport in photosystem II"/>
    <property type="evidence" value="ECO:0007669"/>
    <property type="project" value="InterPro"/>
</dbReference>
<dbReference type="FunFam" id="1.10.10.670:FF:000001">
    <property type="entry name" value="Photosystem II CP43 reaction center protein"/>
    <property type="match status" value="1"/>
</dbReference>
<dbReference type="Gene3D" id="1.10.10.670">
    <property type="entry name" value="photosystem ii from thermosynechococcus elongatus"/>
    <property type="match status" value="1"/>
</dbReference>
<dbReference type="HAMAP" id="MF_01496">
    <property type="entry name" value="PSII_PsbC_CP43"/>
    <property type="match status" value="1"/>
</dbReference>
<dbReference type="InterPro" id="IPR000932">
    <property type="entry name" value="PS_antenna-like"/>
</dbReference>
<dbReference type="InterPro" id="IPR036001">
    <property type="entry name" value="PS_II_antenna-like_sf"/>
</dbReference>
<dbReference type="InterPro" id="IPR005869">
    <property type="entry name" value="PSII_PsbC"/>
</dbReference>
<dbReference type="InterPro" id="IPR044900">
    <property type="entry name" value="PSII_PsbC_sf"/>
</dbReference>
<dbReference type="NCBIfam" id="TIGR01153">
    <property type="entry name" value="psbC"/>
    <property type="match status" value="1"/>
</dbReference>
<dbReference type="Pfam" id="PF00421">
    <property type="entry name" value="PSII"/>
    <property type="match status" value="1"/>
</dbReference>
<dbReference type="SUPFAM" id="SSF161077">
    <property type="entry name" value="Photosystem II antenna protein-like"/>
    <property type="match status" value="1"/>
</dbReference>
<organism>
    <name type="scientific">Platanus occidentalis</name>
    <name type="common">Sycamore</name>
    <name type="synonym">American plane tree</name>
    <dbReference type="NCBI Taxonomy" id="4403"/>
    <lineage>
        <taxon>Eukaryota</taxon>
        <taxon>Viridiplantae</taxon>
        <taxon>Streptophyta</taxon>
        <taxon>Embryophyta</taxon>
        <taxon>Tracheophyta</taxon>
        <taxon>Spermatophyta</taxon>
        <taxon>Magnoliopsida</taxon>
        <taxon>Proteales</taxon>
        <taxon>Platanaceae</taxon>
        <taxon>Platanus</taxon>
    </lineage>
</organism>
<evidence type="ECO:0000255" key="1">
    <source>
        <dbReference type="HAMAP-Rule" id="MF_01496"/>
    </source>
</evidence>
<name>PSBC_PLAOC</name>
<comment type="function">
    <text evidence="1">One of the components of the core complex of photosystem II (PSII). It binds chlorophyll and helps catalyze the primary light-induced photochemical processes of PSII. PSII is a light-driven water:plastoquinone oxidoreductase, using light energy to abstract electrons from H(2)O, generating O(2) and a proton gradient subsequently used for ATP formation.</text>
</comment>
<comment type="cofactor">
    <text evidence="1">Binds multiple chlorophylls and provides some of the ligands for the Ca-4Mn-5O cluster of the oxygen-evolving complex. It may also provide a ligand for a Cl- that is required for oxygen evolution. PSII binds additional chlorophylls, carotenoids and specific lipids.</text>
</comment>
<comment type="subunit">
    <text evidence="1">PSII is composed of 1 copy each of membrane proteins PsbA, PsbB, PsbC, PsbD, PsbE, PsbF, PsbH, PsbI, PsbJ, PsbK, PsbL, PsbM, PsbT, PsbX, PsbY, PsbZ, Psb30/Ycf12, at least 3 peripheral proteins of the oxygen-evolving complex and a large number of cofactors. It forms dimeric complexes.</text>
</comment>
<comment type="subcellular location">
    <subcellularLocation>
        <location evidence="1">Plastid</location>
        <location evidence="1">Chloroplast thylakoid membrane</location>
        <topology evidence="1">Multi-pass membrane protein</topology>
    </subcellularLocation>
</comment>
<comment type="similarity">
    <text evidence="1">Belongs to the PsbB/PsbC family. PsbC subfamily.</text>
</comment>
<gene>
    <name evidence="1" type="primary">psbC</name>
</gene>
<keyword id="KW-0007">Acetylation</keyword>
<keyword id="KW-0148">Chlorophyll</keyword>
<keyword id="KW-0150">Chloroplast</keyword>
<keyword id="KW-0157">Chromophore</keyword>
<keyword id="KW-0464">Manganese</keyword>
<keyword id="KW-0472">Membrane</keyword>
<keyword id="KW-0479">Metal-binding</keyword>
<keyword id="KW-0597">Phosphoprotein</keyword>
<keyword id="KW-0602">Photosynthesis</keyword>
<keyword id="KW-0604">Photosystem II</keyword>
<keyword id="KW-0934">Plastid</keyword>
<keyword id="KW-0793">Thylakoid</keyword>
<keyword id="KW-0812">Transmembrane</keyword>
<keyword id="KW-1133">Transmembrane helix</keyword>
<reference key="1">
    <citation type="journal article" date="2006" name="BMC Plant Biol.">
        <title>Rapid and accurate pyrosequencing of angiosperm plastid genomes.</title>
        <authorList>
            <person name="Moore M.J."/>
            <person name="Dhingra A."/>
            <person name="Soltis P.S."/>
            <person name="Shaw R."/>
            <person name="Farmerie W.G."/>
            <person name="Folta K.M."/>
            <person name="Soltis D.E."/>
        </authorList>
    </citation>
    <scope>NUCLEOTIDE SEQUENCE [LARGE SCALE GENOMIC DNA]</scope>
</reference>
<proteinExistence type="inferred from homology"/>
<sequence>METLFNGTLALAGRDQETTGFAWWAGNARLINLSGKLLGAHVAHAGLIVFWAGAMNLFEVAHFVPEKPMYEQGLILLPHLATLGWGVGPGGEVIDTFPYFVSGVLHLISSAVLGFGGIYHALLGPETLEESFPFFGYVWKDRNKMTTILGIHLILLGIGAFLLVLKALYFGGVYDTWAPGGGDVRKITNLTLSPSVIFGYLLKSPFGGEGWIVSVDDLEDIIGGHVWLGSICILGGIWHILTKPFAWARRALVWSGEAYLSYSLGALSVFGFIACCFVWFNNTAYPSEFYGPTGPEASQAQAFTFLVRDQRLGANVGSAQGPTGLGKYLMRSPTGEVIFGGETMRFWDLRAPWLEPLRGPNGLDLSRLKKDIQPWQERRSAEYMTHAPLGSLNSVGGVATEINAVNYVSPRSWLATSHFVLGFFLFVGHLWHAGRARAAAAGFEKGIDRDFEPVLSMTPLN</sequence>
<accession>Q09G50</accession>
<geneLocation type="chloroplast"/>
<feature type="propeptide" id="PRO_0000431198" evidence="1">
    <location>
        <begin position="1"/>
        <end position="2"/>
    </location>
</feature>
<feature type="chain" id="PRO_0000361477" description="Photosystem II CP43 reaction center protein" evidence="1">
    <location>
        <begin position="3"/>
        <end position="461"/>
    </location>
</feature>
<feature type="transmembrane region" description="Helical" evidence="1">
    <location>
        <begin position="57"/>
        <end position="81"/>
    </location>
</feature>
<feature type="transmembrane region" description="Helical" evidence="1">
    <location>
        <begin position="122"/>
        <end position="143"/>
    </location>
</feature>
<feature type="transmembrane region" description="Helical" evidence="1">
    <location>
        <begin position="166"/>
        <end position="188"/>
    </location>
</feature>
<feature type="transmembrane region" description="Helical" evidence="1">
    <location>
        <begin position="243"/>
        <end position="263"/>
    </location>
</feature>
<feature type="transmembrane region" description="Helical" evidence="1">
    <location>
        <begin position="279"/>
        <end position="300"/>
    </location>
</feature>
<feature type="transmembrane region" description="Helical" evidence="1">
    <location>
        <begin position="435"/>
        <end position="459"/>
    </location>
</feature>
<feature type="binding site" evidence="1">
    <location>
        <position position="355"/>
    </location>
    <ligand>
        <name>[CaMn4O5] cluster</name>
        <dbReference type="ChEBI" id="CHEBI:189552"/>
    </ligand>
</feature>
<feature type="modified residue" description="N-acetylthreonine" evidence="1">
    <location>
        <position position="3"/>
    </location>
</feature>
<feature type="modified residue" description="Phosphothreonine" evidence="1">
    <location>
        <position position="3"/>
    </location>
</feature>
<protein>
    <recommendedName>
        <fullName evidence="1">Photosystem II CP43 reaction center protein</fullName>
    </recommendedName>
    <alternativeName>
        <fullName evidence="1">PSII 43 kDa protein</fullName>
    </alternativeName>
    <alternativeName>
        <fullName evidence="1">Protein CP-43</fullName>
    </alternativeName>
</protein>